<gene>
    <name evidence="1" type="primary">RPS1</name>
    <name type="ORF">HCDG_05124</name>
</gene>
<proteinExistence type="inferred from homology"/>
<comment type="subunit">
    <text evidence="1">Component of the small ribosomal subunit. Mature ribosomes consist of a small (40S) and a large (60S) subunit. The 40S subunit contains about 33 different proteins and 1 molecule of RNA (18S). The 60S subunit contains about 49 different proteins and 3 molecules of RNA (25S, 5.8S and 5S).</text>
</comment>
<comment type="subcellular location">
    <subcellularLocation>
        <location evidence="1">Cytoplasm</location>
    </subcellularLocation>
</comment>
<comment type="similarity">
    <text evidence="1">Belongs to the eukaryotic ribosomal protein eS1 family.</text>
</comment>
<comment type="sequence caution" evidence="3">
    <conflict type="erroneous gene model prediction">
        <sequence resource="EMBL-CDS" id="EER40535"/>
    </conflict>
</comment>
<comment type="sequence caution" evidence="3">
    <conflict type="frameshift">
        <sequence resource="EMBL-CDS" id="EER40535"/>
    </conflict>
</comment>
<keyword id="KW-0007">Acetylation</keyword>
<keyword id="KW-0963">Cytoplasm</keyword>
<keyword id="KW-1185">Reference proteome</keyword>
<keyword id="KW-0687">Ribonucleoprotein</keyword>
<keyword id="KW-0689">Ribosomal protein</keyword>
<name>RS3A_AJECH</name>
<accession>C6HGN3</accession>
<dbReference type="EMBL" id="GG692426">
    <property type="protein sequence ID" value="EER40535.1"/>
    <property type="status" value="ALT_SEQ"/>
    <property type="molecule type" value="Genomic_DNA"/>
</dbReference>
<dbReference type="SMR" id="C6HGN3"/>
<dbReference type="STRING" id="544712.C6HGN3"/>
<dbReference type="eggNOG" id="KOG1628">
    <property type="taxonomic scope" value="Eukaryota"/>
</dbReference>
<dbReference type="HOGENOM" id="CLU_062507_0_0_1"/>
<dbReference type="OrthoDB" id="5056at299071"/>
<dbReference type="Proteomes" id="UP000002624">
    <property type="component" value="Unassembled WGS sequence"/>
</dbReference>
<dbReference type="GO" id="GO:0022627">
    <property type="term" value="C:cytosolic small ribosomal subunit"/>
    <property type="evidence" value="ECO:0007669"/>
    <property type="project" value="UniProtKB-UniRule"/>
</dbReference>
<dbReference type="GO" id="GO:0003735">
    <property type="term" value="F:structural constituent of ribosome"/>
    <property type="evidence" value="ECO:0007669"/>
    <property type="project" value="UniProtKB-UniRule"/>
</dbReference>
<dbReference type="GO" id="GO:0006412">
    <property type="term" value="P:translation"/>
    <property type="evidence" value="ECO:0007669"/>
    <property type="project" value="UniProtKB-UniRule"/>
</dbReference>
<dbReference type="HAMAP" id="MF_03122">
    <property type="entry name" value="Ribosomal_eS1_euk"/>
    <property type="match status" value="1"/>
</dbReference>
<dbReference type="InterPro" id="IPR001593">
    <property type="entry name" value="Ribosomal_eS1"/>
</dbReference>
<dbReference type="InterPro" id="IPR018281">
    <property type="entry name" value="Ribosomal_eS1_CS"/>
</dbReference>
<dbReference type="InterPro" id="IPR027500">
    <property type="entry name" value="Ribosomal_eS1_euk"/>
</dbReference>
<dbReference type="PANTHER" id="PTHR11830">
    <property type="entry name" value="40S RIBOSOMAL PROTEIN S3A"/>
    <property type="match status" value="1"/>
</dbReference>
<dbReference type="Pfam" id="PF01015">
    <property type="entry name" value="Ribosomal_S3Ae"/>
    <property type="match status" value="1"/>
</dbReference>
<dbReference type="SMART" id="SM01397">
    <property type="entry name" value="Ribosomal_S3Ae"/>
    <property type="match status" value="1"/>
</dbReference>
<dbReference type="PROSITE" id="PS01191">
    <property type="entry name" value="RIBOSOMAL_S3AE"/>
    <property type="match status" value="1"/>
</dbReference>
<reference key="1">
    <citation type="submission" date="2009-05" db="EMBL/GenBank/DDBJ databases">
        <title>The genome sequence of Ajellomyces capsulatus strain H143.</title>
        <authorList>
            <person name="Champion M."/>
            <person name="Cuomo C.A."/>
            <person name="Ma L.-J."/>
            <person name="Henn M.R."/>
            <person name="Sil A."/>
            <person name="Goldman B."/>
            <person name="Young S.K."/>
            <person name="Kodira C.D."/>
            <person name="Zeng Q."/>
            <person name="Koehrsen M."/>
            <person name="Alvarado L."/>
            <person name="Berlin A.M."/>
            <person name="Borenstein D."/>
            <person name="Chen Z."/>
            <person name="Engels R."/>
            <person name="Freedman E."/>
            <person name="Gellesch M."/>
            <person name="Goldberg J."/>
            <person name="Griggs A."/>
            <person name="Gujja S."/>
            <person name="Heiman D.I."/>
            <person name="Hepburn T.A."/>
            <person name="Howarth C."/>
            <person name="Jen D."/>
            <person name="Larson L."/>
            <person name="Lewis B."/>
            <person name="Mehta T."/>
            <person name="Park D."/>
            <person name="Pearson M."/>
            <person name="Roberts A."/>
            <person name="Saif S."/>
            <person name="Shea T.D."/>
            <person name="Shenoy N."/>
            <person name="Sisk P."/>
            <person name="Stolte C."/>
            <person name="Sykes S."/>
            <person name="Walk T."/>
            <person name="White J."/>
            <person name="Yandava C."/>
            <person name="Klein B."/>
            <person name="McEwen J.G."/>
            <person name="Puccia R."/>
            <person name="Goldman G.H."/>
            <person name="Felipe M.S."/>
            <person name="Nino-Vega G."/>
            <person name="San-Blas G."/>
            <person name="Taylor J.W."/>
            <person name="Mendoza L."/>
            <person name="Galagan J.E."/>
            <person name="Nusbaum C."/>
            <person name="Birren B.W."/>
        </authorList>
    </citation>
    <scope>NUCLEOTIDE SEQUENCE [LARGE SCALE GENOMIC DNA]</scope>
    <source>
        <strain>H143</strain>
    </source>
</reference>
<evidence type="ECO:0000255" key="1">
    <source>
        <dbReference type="HAMAP-Rule" id="MF_03122"/>
    </source>
</evidence>
<evidence type="ECO:0000256" key="2">
    <source>
        <dbReference type="SAM" id="MobiDB-lite"/>
    </source>
</evidence>
<evidence type="ECO:0000305" key="3"/>
<sequence>MAVGKNKRLSKGKKGLKKRTQDPFSRKDEYSVKAPSTFAVRDVGKTLVNRTTGLKNANDSLKGRIFEVSLADLQNDEDHAFRKVKLRVDEVQGKNCLTNFHGLDFTSDKLRSLVRKWQTLIEANVTVKTTDDYLLRLFAIAFTKRRPNQIKKTTYARSSQIRAIRKKITEIIQREASTRTLAQLTKLIPEVIGREIDKSTHGIYPLQNVHIRKVKLLKSPKFDLGALLALHGESSTDDKGQKVEREFKEQVLESV</sequence>
<protein>
    <recommendedName>
        <fullName evidence="1">Small ribosomal subunit protein eS1</fullName>
    </recommendedName>
    <alternativeName>
        <fullName evidence="3">40S ribosomal protein S1</fullName>
    </alternativeName>
</protein>
<feature type="initiator methionine" description="Removed" evidence="1">
    <location>
        <position position="1"/>
    </location>
</feature>
<feature type="chain" id="PRO_0000389351" description="Small ribosomal subunit protein eS1">
    <location>
        <begin position="2"/>
        <end position="255"/>
    </location>
</feature>
<feature type="region of interest" description="Disordered" evidence="2">
    <location>
        <begin position="1"/>
        <end position="28"/>
    </location>
</feature>
<feature type="compositionally biased region" description="Basic residues" evidence="2">
    <location>
        <begin position="1"/>
        <end position="18"/>
    </location>
</feature>
<feature type="compositionally biased region" description="Basic and acidic residues" evidence="2">
    <location>
        <begin position="19"/>
        <end position="28"/>
    </location>
</feature>
<feature type="modified residue" description="N-acetylalanine; partial" evidence="1">
    <location>
        <position position="2"/>
    </location>
</feature>
<organism>
    <name type="scientific">Ajellomyces capsulatus (strain H143)</name>
    <name type="common">Darling's disease fungus</name>
    <name type="synonym">Histoplasma capsulatum</name>
    <dbReference type="NCBI Taxonomy" id="544712"/>
    <lineage>
        <taxon>Eukaryota</taxon>
        <taxon>Fungi</taxon>
        <taxon>Dikarya</taxon>
        <taxon>Ascomycota</taxon>
        <taxon>Pezizomycotina</taxon>
        <taxon>Eurotiomycetes</taxon>
        <taxon>Eurotiomycetidae</taxon>
        <taxon>Onygenales</taxon>
        <taxon>Ajellomycetaceae</taxon>
        <taxon>Histoplasma</taxon>
    </lineage>
</organism>